<evidence type="ECO:0000255" key="1"/>
<evidence type="ECO:0000256" key="2">
    <source>
        <dbReference type="SAM" id="MobiDB-lite"/>
    </source>
</evidence>
<protein>
    <recommendedName>
        <fullName>Inner membrane protein YfdC</fullName>
    </recommendedName>
</protein>
<organism>
    <name type="scientific">Escherichia coli (strain K12)</name>
    <dbReference type="NCBI Taxonomy" id="83333"/>
    <lineage>
        <taxon>Bacteria</taxon>
        <taxon>Pseudomonadati</taxon>
        <taxon>Pseudomonadota</taxon>
        <taxon>Gammaproteobacteria</taxon>
        <taxon>Enterobacterales</taxon>
        <taxon>Enterobacteriaceae</taxon>
        <taxon>Escherichia</taxon>
    </lineage>
</organism>
<feature type="chain" id="PRO_0000169200" description="Inner membrane protein YfdC">
    <location>
        <begin position="1"/>
        <end position="310"/>
    </location>
</feature>
<feature type="topological domain" description="Cytoplasmic" evidence="1">
    <location>
        <begin position="1"/>
        <end position="58"/>
    </location>
</feature>
<feature type="transmembrane region" description="Helical" evidence="1">
    <location>
        <begin position="59"/>
        <end position="81"/>
    </location>
</feature>
<feature type="topological domain" description="Periplasmic" evidence="1">
    <location>
        <begin position="82"/>
        <end position="90"/>
    </location>
</feature>
<feature type="transmembrane region" description="Helical" evidence="1">
    <location>
        <begin position="91"/>
        <end position="113"/>
    </location>
</feature>
<feature type="topological domain" description="Cytoplasmic" evidence="1">
    <location>
        <begin position="114"/>
        <end position="133"/>
    </location>
</feature>
<feature type="transmembrane region" description="Helical" evidence="1">
    <location>
        <begin position="134"/>
        <end position="156"/>
    </location>
</feature>
<feature type="topological domain" description="Periplasmic" evidence="1">
    <location>
        <begin position="157"/>
        <end position="186"/>
    </location>
</feature>
<feature type="transmembrane region" description="Helical" evidence="1">
    <location>
        <begin position="187"/>
        <end position="206"/>
    </location>
</feature>
<feature type="topological domain" description="Cytoplasmic" evidence="1">
    <location>
        <begin position="207"/>
        <end position="212"/>
    </location>
</feature>
<feature type="transmembrane region" description="Helical" evidence="1">
    <location>
        <begin position="213"/>
        <end position="232"/>
    </location>
</feature>
<feature type="topological domain" description="Periplasmic" evidence="1">
    <location>
        <begin position="233"/>
        <end position="251"/>
    </location>
</feature>
<feature type="transmembrane region" description="Helical" evidence="1">
    <location>
        <begin position="252"/>
        <end position="274"/>
    </location>
</feature>
<feature type="topological domain" description="Cytoplasmic" evidence="1">
    <location>
        <begin position="275"/>
        <end position="310"/>
    </location>
</feature>
<feature type="region of interest" description="Disordered" evidence="2">
    <location>
        <begin position="1"/>
        <end position="27"/>
    </location>
</feature>
<feature type="region of interest" description="Disordered" evidence="2">
    <location>
        <begin position="291"/>
        <end position="310"/>
    </location>
</feature>
<feature type="compositionally biased region" description="Basic and acidic residues" evidence="2">
    <location>
        <begin position="1"/>
        <end position="12"/>
    </location>
</feature>
<feature type="compositionally biased region" description="Basic and acidic residues" evidence="2">
    <location>
        <begin position="291"/>
        <end position="303"/>
    </location>
</feature>
<name>YFDC_ECOLI</name>
<comment type="subcellular location">
    <subcellularLocation>
        <location>Cell inner membrane</location>
        <topology>Multi-pass membrane protein</topology>
    </subcellularLocation>
</comment>
<accession>P37327</accession>
<sequence>MDNDKIDQHSDEIEVESEEKERGKKIEIDEDRLPSRAMAIHEHIRQDGEKELERDAMALLWSAIAAGLSMGASLLAKGIFQVELEGVPGSFLLENLGYTFGFIIVIMARQQLFTENTVTAVLPVMQKPTMSNVGLLIRLWGVVLLGNILGTGIAAWAFEYMPIFNEETRDAFVKIGMDVMKNTPSEMFANAIISGWLIATMVWMFPAAGAAKIVVIILMTWLIALGDTTHIVVGSVEILYLVFNGTLHWSDFIWPFALPTLAGNICGGTFIFALMSHAQIRNDMSNKRKAEARQKAERAENIKKNYKNPA</sequence>
<reference key="1">
    <citation type="submission" date="1994-06" db="EMBL/GenBank/DDBJ databases">
        <authorList>
            <person name="Baumann S."/>
        </authorList>
    </citation>
    <scope>NUCLEOTIDE SEQUENCE [GENOMIC DNA]</scope>
    <source>
        <strain>K12</strain>
    </source>
</reference>
<reference key="2">
    <citation type="journal article" date="1997" name="DNA Res.">
        <title>Construction of a contiguous 874-kb sequence of the Escherichia coli-K12 genome corresponding to 50.0-68.8 min on the linkage map and analysis of its sequence features.</title>
        <authorList>
            <person name="Yamamoto Y."/>
            <person name="Aiba H."/>
            <person name="Baba T."/>
            <person name="Hayashi K."/>
            <person name="Inada T."/>
            <person name="Isono K."/>
            <person name="Itoh T."/>
            <person name="Kimura S."/>
            <person name="Kitagawa M."/>
            <person name="Makino K."/>
            <person name="Miki T."/>
            <person name="Mitsuhashi N."/>
            <person name="Mizobuchi K."/>
            <person name="Mori H."/>
            <person name="Nakade S."/>
            <person name="Nakamura Y."/>
            <person name="Nashimoto H."/>
            <person name="Oshima T."/>
            <person name="Oyama S."/>
            <person name="Saito N."/>
            <person name="Sampei G."/>
            <person name="Satoh Y."/>
            <person name="Sivasundaram S."/>
            <person name="Tagami H."/>
            <person name="Takahashi H."/>
            <person name="Takeda J."/>
            <person name="Takemoto K."/>
            <person name="Uehara K."/>
            <person name="Wada C."/>
            <person name="Yamagata S."/>
            <person name="Horiuchi T."/>
        </authorList>
    </citation>
    <scope>NUCLEOTIDE SEQUENCE [LARGE SCALE GENOMIC DNA]</scope>
    <source>
        <strain>K12 / W3110 / ATCC 27325 / DSM 5911</strain>
    </source>
</reference>
<reference key="3">
    <citation type="journal article" date="1997" name="Science">
        <title>The complete genome sequence of Escherichia coli K-12.</title>
        <authorList>
            <person name="Blattner F.R."/>
            <person name="Plunkett G. III"/>
            <person name="Bloch C.A."/>
            <person name="Perna N.T."/>
            <person name="Burland V."/>
            <person name="Riley M."/>
            <person name="Collado-Vides J."/>
            <person name="Glasner J.D."/>
            <person name="Rode C.K."/>
            <person name="Mayhew G.F."/>
            <person name="Gregor J."/>
            <person name="Davis N.W."/>
            <person name="Kirkpatrick H.A."/>
            <person name="Goeden M.A."/>
            <person name="Rose D.J."/>
            <person name="Mau B."/>
            <person name="Shao Y."/>
        </authorList>
    </citation>
    <scope>NUCLEOTIDE SEQUENCE [LARGE SCALE GENOMIC DNA]</scope>
    <source>
        <strain>K12 / MG1655 / ATCC 47076</strain>
    </source>
</reference>
<reference key="4">
    <citation type="journal article" date="2006" name="Mol. Syst. Biol.">
        <title>Highly accurate genome sequences of Escherichia coli K-12 strains MG1655 and W3110.</title>
        <authorList>
            <person name="Hayashi K."/>
            <person name="Morooka N."/>
            <person name="Yamamoto Y."/>
            <person name="Fujita K."/>
            <person name="Isono K."/>
            <person name="Choi S."/>
            <person name="Ohtsubo E."/>
            <person name="Baba T."/>
            <person name="Wanner B.L."/>
            <person name="Mori H."/>
            <person name="Horiuchi T."/>
        </authorList>
    </citation>
    <scope>NUCLEOTIDE SEQUENCE [LARGE SCALE GENOMIC DNA]</scope>
    <source>
        <strain>K12 / W3110 / ATCC 27325 / DSM 5911</strain>
    </source>
</reference>
<reference key="5">
    <citation type="unpublished observations" date="1994-08">
        <authorList>
            <person name="Rudd K.E."/>
        </authorList>
    </citation>
    <scope>IDENTIFICATION</scope>
</reference>
<reference key="6">
    <citation type="journal article" date="2005" name="Science">
        <title>Global topology analysis of the Escherichia coli inner membrane proteome.</title>
        <authorList>
            <person name="Daley D.O."/>
            <person name="Rapp M."/>
            <person name="Granseth E."/>
            <person name="Melen K."/>
            <person name="Drew D."/>
            <person name="von Heijne G."/>
        </authorList>
    </citation>
    <scope>TOPOLOGY [LARGE SCALE ANALYSIS]</scope>
    <source>
        <strain>K12 / MG1655 / ATCC 47076</strain>
    </source>
</reference>
<keyword id="KW-0997">Cell inner membrane</keyword>
<keyword id="KW-1003">Cell membrane</keyword>
<keyword id="KW-0472">Membrane</keyword>
<keyword id="KW-1185">Reference proteome</keyword>
<keyword id="KW-0812">Transmembrane</keyword>
<keyword id="KW-1133">Transmembrane helix</keyword>
<dbReference type="EMBL" id="U00096">
    <property type="protein sequence ID" value="AAC75407.1"/>
    <property type="molecule type" value="Genomic_DNA"/>
</dbReference>
<dbReference type="EMBL" id="AP009048">
    <property type="protein sequence ID" value="BAA16207.1"/>
    <property type="molecule type" value="Genomic_DNA"/>
</dbReference>
<dbReference type="EMBL" id="U11296">
    <property type="status" value="NOT_ANNOTATED_CDS"/>
    <property type="molecule type" value="Unassigned_DNA"/>
</dbReference>
<dbReference type="PIR" id="A65008">
    <property type="entry name" value="A65008"/>
</dbReference>
<dbReference type="RefSeq" id="NP_416849.1">
    <property type="nucleotide sequence ID" value="NC_000913.3"/>
</dbReference>
<dbReference type="RefSeq" id="WP_000368140.1">
    <property type="nucleotide sequence ID" value="NZ_LN832404.1"/>
</dbReference>
<dbReference type="SMR" id="P37327"/>
<dbReference type="BioGRID" id="4260539">
    <property type="interactions" value="8"/>
</dbReference>
<dbReference type="FunCoup" id="P37327">
    <property type="interactions" value="34"/>
</dbReference>
<dbReference type="STRING" id="511145.b2347"/>
<dbReference type="TCDB" id="1.A.16.4.1">
    <property type="family name" value="the formate-nitrite transporter (fnt) family"/>
</dbReference>
<dbReference type="PaxDb" id="511145-b2347"/>
<dbReference type="EnsemblBacteria" id="AAC75407">
    <property type="protein sequence ID" value="AAC75407"/>
    <property type="gene ID" value="b2347"/>
</dbReference>
<dbReference type="GeneID" id="944801"/>
<dbReference type="KEGG" id="ecj:JW2344"/>
<dbReference type="KEGG" id="eco:b2347"/>
<dbReference type="KEGG" id="ecoc:C3026_13060"/>
<dbReference type="PATRIC" id="fig|1411691.4.peg.4385"/>
<dbReference type="EchoBASE" id="EB2319"/>
<dbReference type="eggNOG" id="COG2116">
    <property type="taxonomic scope" value="Bacteria"/>
</dbReference>
<dbReference type="HOGENOM" id="CLU_061519_1_0_6"/>
<dbReference type="InParanoid" id="P37327"/>
<dbReference type="OMA" id="GWMIATM"/>
<dbReference type="OrthoDB" id="261587at2"/>
<dbReference type="PhylomeDB" id="P37327"/>
<dbReference type="BioCyc" id="EcoCyc:G7217-MONOMER"/>
<dbReference type="PRO" id="PR:P37327"/>
<dbReference type="Proteomes" id="UP000000625">
    <property type="component" value="Chromosome"/>
</dbReference>
<dbReference type="GO" id="GO:0005886">
    <property type="term" value="C:plasma membrane"/>
    <property type="evidence" value="ECO:0000255"/>
    <property type="project" value="EcoCyc"/>
</dbReference>
<dbReference type="GO" id="GO:0015499">
    <property type="term" value="F:formate transmembrane transporter activity"/>
    <property type="evidence" value="ECO:0000318"/>
    <property type="project" value="GO_Central"/>
</dbReference>
<dbReference type="GO" id="GO:0015724">
    <property type="term" value="P:formate transport"/>
    <property type="evidence" value="ECO:0000318"/>
    <property type="project" value="GO_Central"/>
</dbReference>
<dbReference type="FunFam" id="1.20.1080.10:FF:000010">
    <property type="entry name" value="Inner membrane protein"/>
    <property type="match status" value="1"/>
</dbReference>
<dbReference type="Gene3D" id="1.20.1080.10">
    <property type="entry name" value="Glycerol uptake facilitator protein"/>
    <property type="match status" value="1"/>
</dbReference>
<dbReference type="InterPro" id="IPR023271">
    <property type="entry name" value="Aquaporin-like"/>
</dbReference>
<dbReference type="InterPro" id="IPR000292">
    <property type="entry name" value="For/NO2_transpt"/>
</dbReference>
<dbReference type="PANTHER" id="PTHR30520">
    <property type="entry name" value="FORMATE TRANSPORTER-RELATED"/>
    <property type="match status" value="1"/>
</dbReference>
<dbReference type="PANTHER" id="PTHR30520:SF2">
    <property type="entry name" value="INNER MEMBRANE PROTEIN YFDC"/>
    <property type="match status" value="1"/>
</dbReference>
<dbReference type="Pfam" id="PF01226">
    <property type="entry name" value="Form_Nir_trans"/>
    <property type="match status" value="1"/>
</dbReference>
<proteinExistence type="evidence at protein level"/>
<gene>
    <name type="primary">yfdC</name>
    <name type="ordered locus">b2347</name>
    <name type="ordered locus">JW2344</name>
</gene>